<name>AROB_PHOPR</name>
<dbReference type="EC" id="4.2.3.4" evidence="1"/>
<dbReference type="EMBL" id="CR378663">
    <property type="protein sequence ID" value="CAG18720.1"/>
    <property type="molecule type" value="Genomic_DNA"/>
</dbReference>
<dbReference type="RefSeq" id="WP_011217094.1">
    <property type="nucleotide sequence ID" value="NC_006370.1"/>
</dbReference>
<dbReference type="SMR" id="Q6LVF5"/>
<dbReference type="STRING" id="298386.PBPRA0281"/>
<dbReference type="KEGG" id="ppr:PBPRA0281"/>
<dbReference type="eggNOG" id="COG0337">
    <property type="taxonomic scope" value="Bacteria"/>
</dbReference>
<dbReference type="HOGENOM" id="CLU_001201_0_2_6"/>
<dbReference type="UniPathway" id="UPA00053">
    <property type="reaction ID" value="UER00085"/>
</dbReference>
<dbReference type="Proteomes" id="UP000000593">
    <property type="component" value="Chromosome 1"/>
</dbReference>
<dbReference type="GO" id="GO:0005737">
    <property type="term" value="C:cytoplasm"/>
    <property type="evidence" value="ECO:0007669"/>
    <property type="project" value="UniProtKB-SubCell"/>
</dbReference>
<dbReference type="GO" id="GO:0003856">
    <property type="term" value="F:3-dehydroquinate synthase activity"/>
    <property type="evidence" value="ECO:0007669"/>
    <property type="project" value="UniProtKB-UniRule"/>
</dbReference>
<dbReference type="GO" id="GO:0046872">
    <property type="term" value="F:metal ion binding"/>
    <property type="evidence" value="ECO:0007669"/>
    <property type="project" value="UniProtKB-KW"/>
</dbReference>
<dbReference type="GO" id="GO:0000166">
    <property type="term" value="F:nucleotide binding"/>
    <property type="evidence" value="ECO:0007669"/>
    <property type="project" value="UniProtKB-KW"/>
</dbReference>
<dbReference type="GO" id="GO:0008652">
    <property type="term" value="P:amino acid biosynthetic process"/>
    <property type="evidence" value="ECO:0007669"/>
    <property type="project" value="UniProtKB-KW"/>
</dbReference>
<dbReference type="GO" id="GO:0009073">
    <property type="term" value="P:aromatic amino acid family biosynthetic process"/>
    <property type="evidence" value="ECO:0007669"/>
    <property type="project" value="UniProtKB-KW"/>
</dbReference>
<dbReference type="GO" id="GO:0009423">
    <property type="term" value="P:chorismate biosynthetic process"/>
    <property type="evidence" value="ECO:0007669"/>
    <property type="project" value="UniProtKB-UniRule"/>
</dbReference>
<dbReference type="CDD" id="cd08195">
    <property type="entry name" value="DHQS"/>
    <property type="match status" value="1"/>
</dbReference>
<dbReference type="FunFam" id="1.20.1090.10:FF:000002">
    <property type="entry name" value="3-dehydroquinate synthase"/>
    <property type="match status" value="1"/>
</dbReference>
<dbReference type="FunFam" id="3.40.50.1970:FF:000001">
    <property type="entry name" value="3-dehydroquinate synthase"/>
    <property type="match status" value="1"/>
</dbReference>
<dbReference type="Gene3D" id="3.40.50.1970">
    <property type="match status" value="1"/>
</dbReference>
<dbReference type="Gene3D" id="1.20.1090.10">
    <property type="entry name" value="Dehydroquinate synthase-like - alpha domain"/>
    <property type="match status" value="1"/>
</dbReference>
<dbReference type="HAMAP" id="MF_00110">
    <property type="entry name" value="DHQ_synthase"/>
    <property type="match status" value="1"/>
</dbReference>
<dbReference type="InterPro" id="IPR050071">
    <property type="entry name" value="Dehydroquinate_synthase"/>
</dbReference>
<dbReference type="InterPro" id="IPR016037">
    <property type="entry name" value="DHQ_synth_AroB"/>
</dbReference>
<dbReference type="InterPro" id="IPR030963">
    <property type="entry name" value="DHQ_synth_fam"/>
</dbReference>
<dbReference type="InterPro" id="IPR030960">
    <property type="entry name" value="DHQS/DOIS_N"/>
</dbReference>
<dbReference type="InterPro" id="IPR056179">
    <property type="entry name" value="DHQS_C"/>
</dbReference>
<dbReference type="NCBIfam" id="TIGR01357">
    <property type="entry name" value="aroB"/>
    <property type="match status" value="1"/>
</dbReference>
<dbReference type="PANTHER" id="PTHR43622">
    <property type="entry name" value="3-DEHYDROQUINATE SYNTHASE"/>
    <property type="match status" value="1"/>
</dbReference>
<dbReference type="PANTHER" id="PTHR43622:SF7">
    <property type="entry name" value="3-DEHYDROQUINATE SYNTHASE, CHLOROPLASTIC"/>
    <property type="match status" value="1"/>
</dbReference>
<dbReference type="Pfam" id="PF01761">
    <property type="entry name" value="DHQ_synthase"/>
    <property type="match status" value="1"/>
</dbReference>
<dbReference type="Pfam" id="PF24621">
    <property type="entry name" value="DHQS_C"/>
    <property type="match status" value="1"/>
</dbReference>
<dbReference type="PIRSF" id="PIRSF001455">
    <property type="entry name" value="DHQ_synth"/>
    <property type="match status" value="1"/>
</dbReference>
<dbReference type="SUPFAM" id="SSF56796">
    <property type="entry name" value="Dehydroquinate synthase-like"/>
    <property type="match status" value="1"/>
</dbReference>
<feature type="chain" id="PRO_0000231109" description="3-dehydroquinate synthase">
    <location>
        <begin position="1"/>
        <end position="359"/>
    </location>
</feature>
<feature type="binding site" evidence="1">
    <location>
        <begin position="72"/>
        <end position="77"/>
    </location>
    <ligand>
        <name>NAD(+)</name>
        <dbReference type="ChEBI" id="CHEBI:57540"/>
    </ligand>
</feature>
<feature type="binding site" evidence="1">
    <location>
        <begin position="106"/>
        <end position="110"/>
    </location>
    <ligand>
        <name>NAD(+)</name>
        <dbReference type="ChEBI" id="CHEBI:57540"/>
    </ligand>
</feature>
<feature type="binding site" evidence="1">
    <location>
        <begin position="130"/>
        <end position="131"/>
    </location>
    <ligand>
        <name>NAD(+)</name>
        <dbReference type="ChEBI" id="CHEBI:57540"/>
    </ligand>
</feature>
<feature type="binding site" evidence="1">
    <location>
        <position position="143"/>
    </location>
    <ligand>
        <name>NAD(+)</name>
        <dbReference type="ChEBI" id="CHEBI:57540"/>
    </ligand>
</feature>
<feature type="binding site" evidence="1">
    <location>
        <position position="152"/>
    </location>
    <ligand>
        <name>NAD(+)</name>
        <dbReference type="ChEBI" id="CHEBI:57540"/>
    </ligand>
</feature>
<feature type="binding site" evidence="1">
    <location>
        <begin position="170"/>
        <end position="173"/>
    </location>
    <ligand>
        <name>NAD(+)</name>
        <dbReference type="ChEBI" id="CHEBI:57540"/>
    </ligand>
</feature>
<feature type="binding site" evidence="1">
    <location>
        <position position="185"/>
    </location>
    <ligand>
        <name>Zn(2+)</name>
        <dbReference type="ChEBI" id="CHEBI:29105"/>
    </ligand>
</feature>
<feature type="binding site" evidence="1">
    <location>
        <position position="248"/>
    </location>
    <ligand>
        <name>Zn(2+)</name>
        <dbReference type="ChEBI" id="CHEBI:29105"/>
    </ligand>
</feature>
<feature type="binding site" evidence="1">
    <location>
        <position position="265"/>
    </location>
    <ligand>
        <name>Zn(2+)</name>
        <dbReference type="ChEBI" id="CHEBI:29105"/>
    </ligand>
</feature>
<keyword id="KW-0028">Amino-acid biosynthesis</keyword>
<keyword id="KW-0057">Aromatic amino acid biosynthesis</keyword>
<keyword id="KW-0170">Cobalt</keyword>
<keyword id="KW-0963">Cytoplasm</keyword>
<keyword id="KW-0456">Lyase</keyword>
<keyword id="KW-0479">Metal-binding</keyword>
<keyword id="KW-0520">NAD</keyword>
<keyword id="KW-0547">Nucleotide-binding</keyword>
<keyword id="KW-1185">Reference proteome</keyword>
<keyword id="KW-0862">Zinc</keyword>
<organism>
    <name type="scientific">Photobacterium profundum (strain SS9)</name>
    <dbReference type="NCBI Taxonomy" id="298386"/>
    <lineage>
        <taxon>Bacteria</taxon>
        <taxon>Pseudomonadati</taxon>
        <taxon>Pseudomonadota</taxon>
        <taxon>Gammaproteobacteria</taxon>
        <taxon>Vibrionales</taxon>
        <taxon>Vibrionaceae</taxon>
        <taxon>Photobacterium</taxon>
    </lineage>
</organism>
<proteinExistence type="inferred from homology"/>
<evidence type="ECO:0000255" key="1">
    <source>
        <dbReference type="HAMAP-Rule" id="MF_00110"/>
    </source>
</evidence>
<gene>
    <name evidence="1" type="primary">aroB</name>
    <name type="ordered locus">PBPRA0281</name>
</gene>
<reference key="1">
    <citation type="journal article" date="2005" name="Science">
        <title>Life at depth: Photobacterium profundum genome sequence and expression analysis.</title>
        <authorList>
            <person name="Vezzi A."/>
            <person name="Campanaro S."/>
            <person name="D'Angelo M."/>
            <person name="Simonato F."/>
            <person name="Vitulo N."/>
            <person name="Lauro F.M."/>
            <person name="Cestaro A."/>
            <person name="Malacrida G."/>
            <person name="Simionati B."/>
            <person name="Cannata N."/>
            <person name="Romualdi C."/>
            <person name="Bartlett D.H."/>
            <person name="Valle G."/>
        </authorList>
    </citation>
    <scope>NUCLEOTIDE SEQUENCE [LARGE SCALE GENOMIC DNA]</scope>
    <source>
        <strain>ATCC BAA-1253 / SS9</strain>
    </source>
</reference>
<sequence length="359" mass="39034">MERINVNLGDRSYPISIGAELFNTPALFASAISAGRRVVVVSNETVAPLYAAQVMATIRALECEVSLLELPDGEQYKTLETFNQIMTFLLQGNYGRDVVMVALGGGVIGDVVGFAAASYQRGVDFVQVPTTLLSQVDSSVGGKTAVNHPLGKNMIGAFYQPKAVVIDNQCLKTLPAREFASGMAEVIKYGIIADYEFFVWLEQNIEKLQALDNEALCYAIGRCCQIKADVVASDEKESGVRALLNLGHTFGHAIEAEMGYGNWLHGEAVAAGTVFAAKTAHEQGLLSEEDVIRITRLHERAQLPISKPTSMDYDSFIKHMMRDKKVLSGQLRLVLPTSIGTAEVVSDVPHDVLRRVINA</sequence>
<comment type="function">
    <text evidence="1">Catalyzes the conversion of 3-deoxy-D-arabino-heptulosonate 7-phosphate (DAHP) to dehydroquinate (DHQ).</text>
</comment>
<comment type="catalytic activity">
    <reaction evidence="1">
        <text>7-phospho-2-dehydro-3-deoxy-D-arabino-heptonate = 3-dehydroquinate + phosphate</text>
        <dbReference type="Rhea" id="RHEA:21968"/>
        <dbReference type="ChEBI" id="CHEBI:32364"/>
        <dbReference type="ChEBI" id="CHEBI:43474"/>
        <dbReference type="ChEBI" id="CHEBI:58394"/>
        <dbReference type="EC" id="4.2.3.4"/>
    </reaction>
</comment>
<comment type="cofactor">
    <cofactor evidence="1">
        <name>Co(2+)</name>
        <dbReference type="ChEBI" id="CHEBI:48828"/>
    </cofactor>
    <cofactor evidence="1">
        <name>Zn(2+)</name>
        <dbReference type="ChEBI" id="CHEBI:29105"/>
    </cofactor>
    <text evidence="1">Binds 1 divalent metal cation per subunit. Can use either Co(2+) or Zn(2+).</text>
</comment>
<comment type="cofactor">
    <cofactor evidence="1">
        <name>NAD(+)</name>
        <dbReference type="ChEBI" id="CHEBI:57540"/>
    </cofactor>
</comment>
<comment type="pathway">
    <text evidence="1">Metabolic intermediate biosynthesis; chorismate biosynthesis; chorismate from D-erythrose 4-phosphate and phosphoenolpyruvate: step 2/7.</text>
</comment>
<comment type="subcellular location">
    <subcellularLocation>
        <location evidence="1">Cytoplasm</location>
    </subcellularLocation>
</comment>
<comment type="similarity">
    <text evidence="1">Belongs to the sugar phosphate cyclases superfamily. Dehydroquinate synthase family.</text>
</comment>
<accession>Q6LVF5</accession>
<protein>
    <recommendedName>
        <fullName evidence="1">3-dehydroquinate synthase</fullName>
        <shortName evidence="1">DHQS</shortName>
        <ecNumber evidence="1">4.2.3.4</ecNumber>
    </recommendedName>
</protein>